<reference key="1">
    <citation type="journal article" date="2008" name="J. Bacteriol.">
        <title>The pangenome structure of Escherichia coli: comparative genomic analysis of E. coli commensal and pathogenic isolates.</title>
        <authorList>
            <person name="Rasko D.A."/>
            <person name="Rosovitz M.J."/>
            <person name="Myers G.S.A."/>
            <person name="Mongodin E.F."/>
            <person name="Fricke W.F."/>
            <person name="Gajer P."/>
            <person name="Crabtree J."/>
            <person name="Sebaihia M."/>
            <person name="Thomson N.R."/>
            <person name="Chaudhuri R."/>
            <person name="Henderson I.R."/>
            <person name="Sperandio V."/>
            <person name="Ravel J."/>
        </authorList>
    </citation>
    <scope>NUCLEOTIDE SEQUENCE [LARGE SCALE GENOMIC DNA]</scope>
    <source>
        <strain>HS</strain>
    </source>
</reference>
<proteinExistence type="inferred from homology"/>
<feature type="chain" id="PRO_1000065539" description="DnaA initiator-associating protein DiaA">
    <location>
        <begin position="1"/>
        <end position="196"/>
    </location>
</feature>
<feature type="domain" description="SIS" evidence="1">
    <location>
        <begin position="34"/>
        <end position="196"/>
    </location>
</feature>
<sequence length="196" mass="21106">MQERIKACFTESIQTQIAAAEALPDAISRAAMTLVQSLLNGNKILCCGNGTSAANAQHFAASMINRFETERPSLPAIALNTDNVVLTAIANDRLHDEVYAKQVRALGHAGDVLLAISTRGNSRDIVKAVEAAVTRDMTIVALTGYDGGELAGLLGPQDVEIRIPSHRSARIQEMHMLTVNCLCDLIDNTLFPHQDD</sequence>
<keyword id="KW-0235">DNA replication</keyword>
<organism>
    <name type="scientific">Escherichia coli O9:H4 (strain HS)</name>
    <dbReference type="NCBI Taxonomy" id="331112"/>
    <lineage>
        <taxon>Bacteria</taxon>
        <taxon>Pseudomonadati</taxon>
        <taxon>Pseudomonadota</taxon>
        <taxon>Gammaproteobacteria</taxon>
        <taxon>Enterobacterales</taxon>
        <taxon>Enterobacteriaceae</taxon>
        <taxon>Escherichia</taxon>
    </lineage>
</organism>
<name>DIAA_ECOHS</name>
<comment type="function">
    <text evidence="1">Required for the timely initiation of chromosomal replication via direct interactions with the DnaA initiator protein.</text>
</comment>
<comment type="subunit">
    <text evidence="1">Homotetramer; dimer of dimers.</text>
</comment>
<comment type="similarity">
    <text evidence="1">Belongs to the SIS family. DiaA subfamily.</text>
</comment>
<evidence type="ECO:0000255" key="1">
    <source>
        <dbReference type="HAMAP-Rule" id="MF_01157"/>
    </source>
</evidence>
<dbReference type="EMBL" id="CP000802">
    <property type="protein sequence ID" value="ABV07569.1"/>
    <property type="molecule type" value="Genomic_DNA"/>
</dbReference>
<dbReference type="RefSeq" id="WP_001158034.1">
    <property type="nucleotide sequence ID" value="NC_009800.1"/>
</dbReference>
<dbReference type="SMR" id="A8A4W5"/>
<dbReference type="GeneID" id="93778835"/>
<dbReference type="KEGG" id="ecx:EcHS_A3341"/>
<dbReference type="HOGENOM" id="CLU_080999_3_1_6"/>
<dbReference type="GO" id="GO:0097367">
    <property type="term" value="F:carbohydrate derivative binding"/>
    <property type="evidence" value="ECO:0007669"/>
    <property type="project" value="InterPro"/>
</dbReference>
<dbReference type="GO" id="GO:1901135">
    <property type="term" value="P:carbohydrate derivative metabolic process"/>
    <property type="evidence" value="ECO:0007669"/>
    <property type="project" value="InterPro"/>
</dbReference>
<dbReference type="GO" id="GO:0006260">
    <property type="term" value="P:DNA replication"/>
    <property type="evidence" value="ECO:0007669"/>
    <property type="project" value="UniProtKB-UniRule"/>
</dbReference>
<dbReference type="CDD" id="cd05006">
    <property type="entry name" value="SIS_GmhA"/>
    <property type="match status" value="1"/>
</dbReference>
<dbReference type="FunFam" id="3.40.50.10490:FF:000006">
    <property type="entry name" value="DnaA initiator-associating protein DiaA"/>
    <property type="match status" value="1"/>
</dbReference>
<dbReference type="Gene3D" id="3.40.50.10490">
    <property type="entry name" value="Glucose-6-phosphate isomerase like protein, domain 1"/>
    <property type="match status" value="1"/>
</dbReference>
<dbReference type="HAMAP" id="MF_01157">
    <property type="entry name" value="SIS_DiaA"/>
    <property type="match status" value="1"/>
</dbReference>
<dbReference type="InterPro" id="IPR023070">
    <property type="entry name" value="DiaA"/>
</dbReference>
<dbReference type="InterPro" id="IPR035461">
    <property type="entry name" value="GmhA/DiaA"/>
</dbReference>
<dbReference type="InterPro" id="IPR001347">
    <property type="entry name" value="SIS_dom"/>
</dbReference>
<dbReference type="InterPro" id="IPR046348">
    <property type="entry name" value="SIS_dom_sf"/>
</dbReference>
<dbReference type="InterPro" id="IPR050099">
    <property type="entry name" value="SIS_GmhA/DiaA_subfam"/>
</dbReference>
<dbReference type="NCBIfam" id="NF008138">
    <property type="entry name" value="PRK10886.1"/>
    <property type="match status" value="1"/>
</dbReference>
<dbReference type="NCBIfam" id="NF010546">
    <property type="entry name" value="PRK13936.1"/>
    <property type="match status" value="1"/>
</dbReference>
<dbReference type="PANTHER" id="PTHR30390:SF6">
    <property type="entry name" value="DNAA INITIATOR-ASSOCIATING PROTEIN DIAA"/>
    <property type="match status" value="1"/>
</dbReference>
<dbReference type="PANTHER" id="PTHR30390">
    <property type="entry name" value="SEDOHEPTULOSE 7-PHOSPHATE ISOMERASE / DNAA INITIATOR-ASSOCIATING FACTOR FOR REPLICATION INITIATION"/>
    <property type="match status" value="1"/>
</dbReference>
<dbReference type="Pfam" id="PF13580">
    <property type="entry name" value="SIS_2"/>
    <property type="match status" value="1"/>
</dbReference>
<dbReference type="SUPFAM" id="SSF53697">
    <property type="entry name" value="SIS domain"/>
    <property type="match status" value="1"/>
</dbReference>
<dbReference type="PROSITE" id="PS51464">
    <property type="entry name" value="SIS"/>
    <property type="match status" value="1"/>
</dbReference>
<gene>
    <name evidence="1" type="primary">diaA</name>
    <name type="ordered locus">EcHS_A3341</name>
</gene>
<protein>
    <recommendedName>
        <fullName evidence="1">DnaA initiator-associating protein DiaA</fullName>
    </recommendedName>
</protein>
<accession>A8A4W5</accession>